<accession>A1TI29</accession>
<name>RNPA_MYCVP</name>
<comment type="function">
    <text evidence="1">RNaseP catalyzes the removal of the 5'-leader sequence from pre-tRNA to produce the mature 5'-terminus. It can also cleave other RNA substrates such as 4.5S RNA. The protein component plays an auxiliary but essential role in vivo by binding to the 5'-leader sequence and broadening the substrate specificity of the ribozyme.</text>
</comment>
<comment type="catalytic activity">
    <reaction evidence="1">
        <text>Endonucleolytic cleavage of RNA, removing 5'-extranucleotides from tRNA precursor.</text>
        <dbReference type="EC" id="3.1.26.5"/>
    </reaction>
</comment>
<comment type="subunit">
    <text evidence="1">Consists of a catalytic RNA component (M1 or rnpB) and a protein subunit.</text>
</comment>
<comment type="similarity">
    <text evidence="1">Belongs to the RnpA family.</text>
</comment>
<protein>
    <recommendedName>
        <fullName evidence="1">Ribonuclease P protein component</fullName>
        <shortName evidence="1">RNase P protein</shortName>
        <shortName evidence="1">RNaseP protein</shortName>
        <ecNumber evidence="1">3.1.26.5</ecNumber>
    </recommendedName>
    <alternativeName>
        <fullName evidence="1">Protein C5</fullName>
    </alternativeName>
</protein>
<reference key="1">
    <citation type="submission" date="2006-12" db="EMBL/GenBank/DDBJ databases">
        <title>Complete sequence of Mycobacterium vanbaalenii PYR-1.</title>
        <authorList>
            <consortium name="US DOE Joint Genome Institute"/>
            <person name="Copeland A."/>
            <person name="Lucas S."/>
            <person name="Lapidus A."/>
            <person name="Barry K."/>
            <person name="Detter J.C."/>
            <person name="Glavina del Rio T."/>
            <person name="Hammon N."/>
            <person name="Israni S."/>
            <person name="Dalin E."/>
            <person name="Tice H."/>
            <person name="Pitluck S."/>
            <person name="Singan V."/>
            <person name="Schmutz J."/>
            <person name="Larimer F."/>
            <person name="Land M."/>
            <person name="Hauser L."/>
            <person name="Kyrpides N."/>
            <person name="Anderson I.J."/>
            <person name="Miller C."/>
            <person name="Richardson P."/>
        </authorList>
    </citation>
    <scope>NUCLEOTIDE SEQUENCE [LARGE SCALE GENOMIC DNA]</scope>
    <source>
        <strain>DSM 7251 / JCM 13017 / BCRC 16820 / KCTC 9966 / NRRL B-24157 / PYR-1</strain>
    </source>
</reference>
<feature type="chain" id="PRO_1000021435" description="Ribonuclease P protein component">
    <location>
        <begin position="1"/>
        <end position="119"/>
    </location>
</feature>
<feature type="region of interest" description="Disordered" evidence="2">
    <location>
        <begin position="1"/>
        <end position="20"/>
    </location>
</feature>
<sequence length="119" mass="13209">MLPAQHRMTRSTEFGATVSKGTRAAQPDVVVYRLRSDQTADPGPRVGLIVSKAVGNAVQRHRVSRRLRHAALAVLEDLDPSDRVVIRALPRSRDAVTPRLEQELRTALERIRQRTGAPS</sequence>
<gene>
    <name evidence="1" type="primary">rnpA</name>
    <name type="ordered locus">Mvan_6077</name>
</gene>
<evidence type="ECO:0000255" key="1">
    <source>
        <dbReference type="HAMAP-Rule" id="MF_00227"/>
    </source>
</evidence>
<evidence type="ECO:0000256" key="2">
    <source>
        <dbReference type="SAM" id="MobiDB-lite"/>
    </source>
</evidence>
<organism>
    <name type="scientific">Mycolicibacterium vanbaalenii (strain DSM 7251 / JCM 13017 / BCRC 16820 / KCTC 9966 / NRRL B-24157 / PYR-1)</name>
    <name type="common">Mycobacterium vanbaalenii</name>
    <dbReference type="NCBI Taxonomy" id="350058"/>
    <lineage>
        <taxon>Bacteria</taxon>
        <taxon>Bacillati</taxon>
        <taxon>Actinomycetota</taxon>
        <taxon>Actinomycetes</taxon>
        <taxon>Mycobacteriales</taxon>
        <taxon>Mycobacteriaceae</taxon>
        <taxon>Mycolicibacterium</taxon>
    </lineage>
</organism>
<keyword id="KW-0255">Endonuclease</keyword>
<keyword id="KW-0378">Hydrolase</keyword>
<keyword id="KW-0540">Nuclease</keyword>
<keyword id="KW-0694">RNA-binding</keyword>
<keyword id="KW-0819">tRNA processing</keyword>
<proteinExistence type="inferred from homology"/>
<dbReference type="EC" id="3.1.26.5" evidence="1"/>
<dbReference type="EMBL" id="CP000511">
    <property type="protein sequence ID" value="ABM16829.1"/>
    <property type="molecule type" value="Genomic_DNA"/>
</dbReference>
<dbReference type="RefSeq" id="WP_011783173.1">
    <property type="nucleotide sequence ID" value="NZ_JACKSD010000290.1"/>
</dbReference>
<dbReference type="SMR" id="A1TI29"/>
<dbReference type="STRING" id="350058.Mvan_6077"/>
<dbReference type="KEGG" id="mva:Mvan_6077"/>
<dbReference type="eggNOG" id="COG0594">
    <property type="taxonomic scope" value="Bacteria"/>
</dbReference>
<dbReference type="HOGENOM" id="CLU_117179_4_1_11"/>
<dbReference type="Proteomes" id="UP000009159">
    <property type="component" value="Chromosome"/>
</dbReference>
<dbReference type="GO" id="GO:0030677">
    <property type="term" value="C:ribonuclease P complex"/>
    <property type="evidence" value="ECO:0007669"/>
    <property type="project" value="TreeGrafter"/>
</dbReference>
<dbReference type="GO" id="GO:0042781">
    <property type="term" value="F:3'-tRNA processing endoribonuclease activity"/>
    <property type="evidence" value="ECO:0007669"/>
    <property type="project" value="TreeGrafter"/>
</dbReference>
<dbReference type="GO" id="GO:0004526">
    <property type="term" value="F:ribonuclease P activity"/>
    <property type="evidence" value="ECO:0007669"/>
    <property type="project" value="UniProtKB-UniRule"/>
</dbReference>
<dbReference type="GO" id="GO:0000049">
    <property type="term" value="F:tRNA binding"/>
    <property type="evidence" value="ECO:0007669"/>
    <property type="project" value="UniProtKB-UniRule"/>
</dbReference>
<dbReference type="GO" id="GO:0001682">
    <property type="term" value="P:tRNA 5'-leader removal"/>
    <property type="evidence" value="ECO:0007669"/>
    <property type="project" value="UniProtKB-UniRule"/>
</dbReference>
<dbReference type="Gene3D" id="3.30.230.10">
    <property type="match status" value="1"/>
</dbReference>
<dbReference type="HAMAP" id="MF_00227">
    <property type="entry name" value="RNase_P"/>
    <property type="match status" value="1"/>
</dbReference>
<dbReference type="InterPro" id="IPR020568">
    <property type="entry name" value="Ribosomal_Su5_D2-typ_SF"/>
</dbReference>
<dbReference type="InterPro" id="IPR014721">
    <property type="entry name" value="Ribsml_uS5_D2-typ_fold_subgr"/>
</dbReference>
<dbReference type="InterPro" id="IPR000100">
    <property type="entry name" value="RNase_P"/>
</dbReference>
<dbReference type="NCBIfam" id="TIGR00188">
    <property type="entry name" value="rnpA"/>
    <property type="match status" value="1"/>
</dbReference>
<dbReference type="PANTHER" id="PTHR33992">
    <property type="entry name" value="RIBONUCLEASE P PROTEIN COMPONENT"/>
    <property type="match status" value="1"/>
</dbReference>
<dbReference type="PANTHER" id="PTHR33992:SF1">
    <property type="entry name" value="RIBONUCLEASE P PROTEIN COMPONENT"/>
    <property type="match status" value="1"/>
</dbReference>
<dbReference type="Pfam" id="PF00825">
    <property type="entry name" value="Ribonuclease_P"/>
    <property type="match status" value="1"/>
</dbReference>
<dbReference type="SUPFAM" id="SSF54211">
    <property type="entry name" value="Ribosomal protein S5 domain 2-like"/>
    <property type="match status" value="1"/>
</dbReference>